<organism>
    <name type="scientific">Trichormus variabilis (strain ATCC 29413 / PCC 7937)</name>
    <name type="common">Anabaena variabilis</name>
    <dbReference type="NCBI Taxonomy" id="240292"/>
    <lineage>
        <taxon>Bacteria</taxon>
        <taxon>Bacillati</taxon>
        <taxon>Cyanobacteriota</taxon>
        <taxon>Cyanophyceae</taxon>
        <taxon>Nostocales</taxon>
        <taxon>Nostocaceae</taxon>
        <taxon>Trichormus</taxon>
    </lineage>
</organism>
<reference key="1">
    <citation type="journal article" date="2014" name="Stand. Genomic Sci.">
        <title>Complete genome sequence of Anabaena variabilis ATCC 29413.</title>
        <authorList>
            <person name="Thiel T."/>
            <person name="Pratte B.S."/>
            <person name="Zhong J."/>
            <person name="Goodwin L."/>
            <person name="Copeland A."/>
            <person name="Lucas S."/>
            <person name="Han C."/>
            <person name="Pitluck S."/>
            <person name="Land M.L."/>
            <person name="Kyrpides N.C."/>
            <person name="Woyke T."/>
        </authorList>
    </citation>
    <scope>NUCLEOTIDE SEQUENCE [LARGE SCALE GENOMIC DNA]</scope>
    <source>
        <strain>ATCC 29413 / PCC 7937</strain>
    </source>
</reference>
<gene>
    <name evidence="1" type="primary">grpE</name>
    <name type="ordered locus">Ava_0377</name>
</gene>
<name>GRPE_TRIV2</name>
<accession>Q3MG83</accession>
<feature type="chain" id="PRO_1000053536" description="Protein GrpE">
    <location>
        <begin position="1"/>
        <end position="248"/>
    </location>
</feature>
<feature type="region of interest" description="Disordered" evidence="2">
    <location>
        <begin position="229"/>
        <end position="248"/>
    </location>
</feature>
<feature type="compositionally biased region" description="Polar residues" evidence="2">
    <location>
        <begin position="238"/>
        <end position="248"/>
    </location>
</feature>
<comment type="function">
    <text evidence="1">Participates actively in the response to hyperosmotic and heat shock by preventing the aggregation of stress-denatured proteins, in association with DnaK and GrpE. It is the nucleotide exchange factor for DnaK and may function as a thermosensor. Unfolded proteins bind initially to DnaJ; upon interaction with the DnaJ-bound protein, DnaK hydrolyzes its bound ATP, resulting in the formation of a stable complex. GrpE releases ADP from DnaK; ATP binding to DnaK triggers the release of the substrate protein, thus completing the reaction cycle. Several rounds of ATP-dependent interactions between DnaJ, DnaK and GrpE are required for fully efficient folding.</text>
</comment>
<comment type="subunit">
    <text evidence="1">Homodimer.</text>
</comment>
<comment type="subcellular location">
    <subcellularLocation>
        <location evidence="1">Cytoplasm</location>
    </subcellularLocation>
</comment>
<comment type="similarity">
    <text evidence="1">Belongs to the GrpE family.</text>
</comment>
<protein>
    <recommendedName>
        <fullName evidence="1">Protein GrpE</fullName>
    </recommendedName>
    <alternativeName>
        <fullName evidence="1">HSP-70 cofactor</fullName>
    </alternativeName>
</protein>
<keyword id="KW-0143">Chaperone</keyword>
<keyword id="KW-0963">Cytoplasm</keyword>
<keyword id="KW-0346">Stress response</keyword>
<dbReference type="EMBL" id="CP000117">
    <property type="protein sequence ID" value="ABA20003.1"/>
    <property type="molecule type" value="Genomic_DNA"/>
</dbReference>
<dbReference type="SMR" id="Q3MG83"/>
<dbReference type="STRING" id="240292.Ava_0377"/>
<dbReference type="KEGG" id="ava:Ava_0377"/>
<dbReference type="eggNOG" id="COG0576">
    <property type="taxonomic scope" value="Bacteria"/>
</dbReference>
<dbReference type="HOGENOM" id="CLU_057217_5_1_3"/>
<dbReference type="Proteomes" id="UP000002533">
    <property type="component" value="Chromosome"/>
</dbReference>
<dbReference type="GO" id="GO:0005737">
    <property type="term" value="C:cytoplasm"/>
    <property type="evidence" value="ECO:0007669"/>
    <property type="project" value="UniProtKB-SubCell"/>
</dbReference>
<dbReference type="GO" id="GO:0000774">
    <property type="term" value="F:adenyl-nucleotide exchange factor activity"/>
    <property type="evidence" value="ECO:0007669"/>
    <property type="project" value="InterPro"/>
</dbReference>
<dbReference type="GO" id="GO:0042803">
    <property type="term" value="F:protein homodimerization activity"/>
    <property type="evidence" value="ECO:0007669"/>
    <property type="project" value="InterPro"/>
</dbReference>
<dbReference type="GO" id="GO:0051087">
    <property type="term" value="F:protein-folding chaperone binding"/>
    <property type="evidence" value="ECO:0007669"/>
    <property type="project" value="InterPro"/>
</dbReference>
<dbReference type="GO" id="GO:0051082">
    <property type="term" value="F:unfolded protein binding"/>
    <property type="evidence" value="ECO:0007669"/>
    <property type="project" value="TreeGrafter"/>
</dbReference>
<dbReference type="GO" id="GO:0006457">
    <property type="term" value="P:protein folding"/>
    <property type="evidence" value="ECO:0007669"/>
    <property type="project" value="InterPro"/>
</dbReference>
<dbReference type="CDD" id="cd00446">
    <property type="entry name" value="GrpE"/>
    <property type="match status" value="1"/>
</dbReference>
<dbReference type="FunFam" id="2.30.22.10:FF:000001">
    <property type="entry name" value="Protein GrpE"/>
    <property type="match status" value="1"/>
</dbReference>
<dbReference type="Gene3D" id="3.90.20.20">
    <property type="match status" value="1"/>
</dbReference>
<dbReference type="Gene3D" id="2.30.22.10">
    <property type="entry name" value="Head domain of nucleotide exchange factor GrpE"/>
    <property type="match status" value="1"/>
</dbReference>
<dbReference type="HAMAP" id="MF_01151">
    <property type="entry name" value="GrpE"/>
    <property type="match status" value="1"/>
</dbReference>
<dbReference type="InterPro" id="IPR000740">
    <property type="entry name" value="GrpE"/>
</dbReference>
<dbReference type="InterPro" id="IPR013805">
    <property type="entry name" value="GrpE_coiled_coil"/>
</dbReference>
<dbReference type="InterPro" id="IPR009012">
    <property type="entry name" value="GrpE_head"/>
</dbReference>
<dbReference type="NCBIfam" id="NF010738">
    <property type="entry name" value="PRK14140.1"/>
    <property type="match status" value="1"/>
</dbReference>
<dbReference type="NCBIfam" id="NF010741">
    <property type="entry name" value="PRK14143.1"/>
    <property type="match status" value="1"/>
</dbReference>
<dbReference type="PANTHER" id="PTHR21237">
    <property type="entry name" value="GRPE PROTEIN"/>
    <property type="match status" value="1"/>
</dbReference>
<dbReference type="PANTHER" id="PTHR21237:SF23">
    <property type="entry name" value="GRPE PROTEIN HOMOLOG, MITOCHONDRIAL"/>
    <property type="match status" value="1"/>
</dbReference>
<dbReference type="Pfam" id="PF01025">
    <property type="entry name" value="GrpE"/>
    <property type="match status" value="1"/>
</dbReference>
<dbReference type="PRINTS" id="PR00773">
    <property type="entry name" value="GRPEPROTEIN"/>
</dbReference>
<dbReference type="SUPFAM" id="SSF58014">
    <property type="entry name" value="Coiled-coil domain of nucleotide exchange factor GrpE"/>
    <property type="match status" value="1"/>
</dbReference>
<dbReference type="SUPFAM" id="SSF51064">
    <property type="entry name" value="Head domain of nucleotide exchange factor GrpE"/>
    <property type="match status" value="1"/>
</dbReference>
<dbReference type="PROSITE" id="PS01071">
    <property type="entry name" value="GRPE"/>
    <property type="match status" value="1"/>
</dbReference>
<sequence length="248" mass="27981">MIDENKQVNHTSQQLGESTEVKQAIMSESPAQINNNESTNEVTESVAIPTNVVGDTTATEDNGFTATQIQEANTAALAELTQQINSLKTQLDERSTQYMRIAADFENYRKRTQKEKEELDLQVKRNTILELLPIVDNFERARSHLKPQTESEMTIHKSYQGVYKQLVDSLKRLGVSPMRPEGQEFDPNLHEAVMREPTDEHPEGTVLEELVRGYYLGDRVLRHSMVKVAAPKEDTLPAQENQSSPADS</sequence>
<evidence type="ECO:0000255" key="1">
    <source>
        <dbReference type="HAMAP-Rule" id="MF_01151"/>
    </source>
</evidence>
<evidence type="ECO:0000256" key="2">
    <source>
        <dbReference type="SAM" id="MobiDB-lite"/>
    </source>
</evidence>
<proteinExistence type="inferred from homology"/>